<reference key="1">
    <citation type="journal article" date="2006" name="BMC Genomics">
        <title>Complete plastid genome sequence of Daucus carota: implications for biotechnology and phylogeny of angiosperms.</title>
        <authorList>
            <person name="Ruhlman T."/>
            <person name="Lee S.-B."/>
            <person name="Jansen R.K."/>
            <person name="Hostetler J.B."/>
            <person name="Tallon L.J."/>
            <person name="Town C.D."/>
            <person name="Daniell H."/>
        </authorList>
    </citation>
    <scope>NUCLEOTIDE SEQUENCE [LARGE SCALE GENOMIC DNA]</scope>
    <source>
        <strain>cv. Danvers Half-long</strain>
    </source>
</reference>
<name>ATPB_DAUCA</name>
<geneLocation type="chloroplast"/>
<evidence type="ECO:0000255" key="1">
    <source>
        <dbReference type="HAMAP-Rule" id="MF_01347"/>
    </source>
</evidence>
<feature type="chain" id="PRO_0000275180" description="ATP synthase subunit beta, chloroplastic">
    <location>
        <begin position="1"/>
        <end position="498"/>
    </location>
</feature>
<feature type="binding site" evidence="1">
    <location>
        <begin position="172"/>
        <end position="179"/>
    </location>
    <ligand>
        <name>ATP</name>
        <dbReference type="ChEBI" id="CHEBI:30616"/>
    </ligand>
</feature>
<proteinExistence type="inferred from homology"/>
<gene>
    <name evidence="1" type="primary">atpB</name>
</gene>
<accession>Q0G9V5</accession>
<protein>
    <recommendedName>
        <fullName evidence="1">ATP synthase subunit beta, chloroplastic</fullName>
        <ecNumber evidence="1">7.1.2.2</ecNumber>
    </recommendedName>
    <alternativeName>
        <fullName evidence="1">ATP synthase F1 sector subunit beta</fullName>
    </alternativeName>
    <alternativeName>
        <fullName evidence="1">F-ATPase subunit beta</fullName>
    </alternativeName>
</protein>
<keyword id="KW-0066">ATP synthesis</keyword>
<keyword id="KW-0067">ATP-binding</keyword>
<keyword id="KW-0139">CF(1)</keyword>
<keyword id="KW-0150">Chloroplast</keyword>
<keyword id="KW-0375">Hydrogen ion transport</keyword>
<keyword id="KW-0406">Ion transport</keyword>
<keyword id="KW-0472">Membrane</keyword>
<keyword id="KW-0547">Nucleotide-binding</keyword>
<keyword id="KW-0934">Plastid</keyword>
<keyword id="KW-0793">Thylakoid</keyword>
<keyword id="KW-1278">Translocase</keyword>
<keyword id="KW-0813">Transport</keyword>
<comment type="function">
    <text evidence="1">Produces ATP from ADP in the presence of a proton gradient across the membrane. The catalytic sites are hosted primarily by the beta subunits.</text>
</comment>
<comment type="catalytic activity">
    <reaction evidence="1">
        <text>ATP + H2O + 4 H(+)(in) = ADP + phosphate + 5 H(+)(out)</text>
        <dbReference type="Rhea" id="RHEA:57720"/>
        <dbReference type="ChEBI" id="CHEBI:15377"/>
        <dbReference type="ChEBI" id="CHEBI:15378"/>
        <dbReference type="ChEBI" id="CHEBI:30616"/>
        <dbReference type="ChEBI" id="CHEBI:43474"/>
        <dbReference type="ChEBI" id="CHEBI:456216"/>
        <dbReference type="EC" id="7.1.2.2"/>
    </reaction>
</comment>
<comment type="subunit">
    <text evidence="1">F-type ATPases have 2 components, CF(1) - the catalytic core - and CF(0) - the membrane proton channel. CF(1) has five subunits: alpha(3), beta(3), gamma(1), delta(1), epsilon(1). CF(0) has four main subunits: a(1), b(1), b'(1) and c(9-12).</text>
</comment>
<comment type="subcellular location">
    <subcellularLocation>
        <location evidence="1">Plastid</location>
        <location evidence="1">Chloroplast thylakoid membrane</location>
        <topology evidence="1">Peripheral membrane protein</topology>
    </subcellularLocation>
</comment>
<comment type="similarity">
    <text evidence="1">Belongs to the ATPase alpha/beta chains family.</text>
</comment>
<organism>
    <name type="scientific">Daucus carota</name>
    <name type="common">Wild carrot</name>
    <dbReference type="NCBI Taxonomy" id="4039"/>
    <lineage>
        <taxon>Eukaryota</taxon>
        <taxon>Viridiplantae</taxon>
        <taxon>Streptophyta</taxon>
        <taxon>Embryophyta</taxon>
        <taxon>Tracheophyta</taxon>
        <taxon>Spermatophyta</taxon>
        <taxon>Magnoliopsida</taxon>
        <taxon>eudicotyledons</taxon>
        <taxon>Gunneridae</taxon>
        <taxon>Pentapetalae</taxon>
        <taxon>asterids</taxon>
        <taxon>campanulids</taxon>
        <taxon>Apiales</taxon>
        <taxon>Apiaceae</taxon>
        <taxon>Apioideae</taxon>
        <taxon>Scandiceae</taxon>
        <taxon>Daucinae</taxon>
        <taxon>Daucus</taxon>
        <taxon>Daucus sect. Daucus</taxon>
    </lineage>
</organism>
<dbReference type="EC" id="7.1.2.2" evidence="1"/>
<dbReference type="EMBL" id="DQ898156">
    <property type="protein sequence ID" value="ABI32431.1"/>
    <property type="molecule type" value="Genomic_DNA"/>
</dbReference>
<dbReference type="RefSeq" id="YP_740124.1">
    <property type="nucleotide sequence ID" value="NC_008325.1"/>
</dbReference>
<dbReference type="SMR" id="Q0G9V5"/>
<dbReference type="GeneID" id="4266750"/>
<dbReference type="OMA" id="IDVYFPE"/>
<dbReference type="GO" id="GO:0009535">
    <property type="term" value="C:chloroplast thylakoid membrane"/>
    <property type="evidence" value="ECO:0007669"/>
    <property type="project" value="UniProtKB-SubCell"/>
</dbReference>
<dbReference type="GO" id="GO:0005739">
    <property type="term" value="C:mitochondrion"/>
    <property type="evidence" value="ECO:0007669"/>
    <property type="project" value="GOC"/>
</dbReference>
<dbReference type="GO" id="GO:0045259">
    <property type="term" value="C:proton-transporting ATP synthase complex"/>
    <property type="evidence" value="ECO:0007669"/>
    <property type="project" value="UniProtKB-KW"/>
</dbReference>
<dbReference type="GO" id="GO:0005524">
    <property type="term" value="F:ATP binding"/>
    <property type="evidence" value="ECO:0007669"/>
    <property type="project" value="UniProtKB-UniRule"/>
</dbReference>
<dbReference type="GO" id="GO:0016887">
    <property type="term" value="F:ATP hydrolysis activity"/>
    <property type="evidence" value="ECO:0007669"/>
    <property type="project" value="InterPro"/>
</dbReference>
<dbReference type="GO" id="GO:0046933">
    <property type="term" value="F:proton-transporting ATP synthase activity, rotational mechanism"/>
    <property type="evidence" value="ECO:0007669"/>
    <property type="project" value="UniProtKB-UniRule"/>
</dbReference>
<dbReference type="GO" id="GO:0042776">
    <property type="term" value="P:proton motive force-driven mitochondrial ATP synthesis"/>
    <property type="evidence" value="ECO:0007669"/>
    <property type="project" value="TreeGrafter"/>
</dbReference>
<dbReference type="CDD" id="cd18110">
    <property type="entry name" value="ATP-synt_F1_beta_C"/>
    <property type="match status" value="1"/>
</dbReference>
<dbReference type="CDD" id="cd18115">
    <property type="entry name" value="ATP-synt_F1_beta_N"/>
    <property type="match status" value="1"/>
</dbReference>
<dbReference type="CDD" id="cd01133">
    <property type="entry name" value="F1-ATPase_beta_CD"/>
    <property type="match status" value="1"/>
</dbReference>
<dbReference type="FunFam" id="1.10.1140.10:FF:000001">
    <property type="entry name" value="ATP synthase subunit beta"/>
    <property type="match status" value="1"/>
</dbReference>
<dbReference type="FunFam" id="3.40.50.12240:FF:000006">
    <property type="entry name" value="ATP synthase subunit beta"/>
    <property type="match status" value="1"/>
</dbReference>
<dbReference type="FunFam" id="3.40.50.300:FF:000004">
    <property type="entry name" value="ATP synthase subunit beta"/>
    <property type="match status" value="1"/>
</dbReference>
<dbReference type="FunFam" id="2.40.10.170:FF:000002">
    <property type="entry name" value="ATP synthase subunit beta, chloroplastic"/>
    <property type="match status" value="1"/>
</dbReference>
<dbReference type="Gene3D" id="2.40.10.170">
    <property type="match status" value="1"/>
</dbReference>
<dbReference type="Gene3D" id="1.10.1140.10">
    <property type="entry name" value="Bovine Mitochondrial F1-atpase, Atp Synthase Beta Chain, Chain D, domain 3"/>
    <property type="match status" value="1"/>
</dbReference>
<dbReference type="Gene3D" id="3.40.50.300">
    <property type="entry name" value="P-loop containing nucleotide triphosphate hydrolases"/>
    <property type="match status" value="1"/>
</dbReference>
<dbReference type="HAMAP" id="MF_01347">
    <property type="entry name" value="ATP_synth_beta_bact"/>
    <property type="match status" value="1"/>
</dbReference>
<dbReference type="InterPro" id="IPR003593">
    <property type="entry name" value="AAA+_ATPase"/>
</dbReference>
<dbReference type="InterPro" id="IPR055190">
    <property type="entry name" value="ATP-synt_VA_C"/>
</dbReference>
<dbReference type="InterPro" id="IPR005722">
    <property type="entry name" value="ATP_synth_F1_bsu"/>
</dbReference>
<dbReference type="InterPro" id="IPR020003">
    <property type="entry name" value="ATPase_a/bsu_AS"/>
</dbReference>
<dbReference type="InterPro" id="IPR050053">
    <property type="entry name" value="ATPase_alpha/beta_chains"/>
</dbReference>
<dbReference type="InterPro" id="IPR004100">
    <property type="entry name" value="ATPase_F1/V1/A1_a/bsu_N"/>
</dbReference>
<dbReference type="InterPro" id="IPR036121">
    <property type="entry name" value="ATPase_F1/V1/A1_a/bsu_N_sf"/>
</dbReference>
<dbReference type="InterPro" id="IPR000194">
    <property type="entry name" value="ATPase_F1/V1/A1_a/bsu_nucl-bd"/>
</dbReference>
<dbReference type="InterPro" id="IPR024034">
    <property type="entry name" value="ATPase_F1/V1_b/a_C"/>
</dbReference>
<dbReference type="InterPro" id="IPR027417">
    <property type="entry name" value="P-loop_NTPase"/>
</dbReference>
<dbReference type="NCBIfam" id="TIGR01039">
    <property type="entry name" value="atpD"/>
    <property type="match status" value="1"/>
</dbReference>
<dbReference type="PANTHER" id="PTHR15184">
    <property type="entry name" value="ATP SYNTHASE"/>
    <property type="match status" value="1"/>
</dbReference>
<dbReference type="PANTHER" id="PTHR15184:SF71">
    <property type="entry name" value="ATP SYNTHASE SUBUNIT BETA, MITOCHONDRIAL"/>
    <property type="match status" value="1"/>
</dbReference>
<dbReference type="Pfam" id="PF00006">
    <property type="entry name" value="ATP-synt_ab"/>
    <property type="match status" value="1"/>
</dbReference>
<dbReference type="Pfam" id="PF02874">
    <property type="entry name" value="ATP-synt_ab_N"/>
    <property type="match status" value="1"/>
</dbReference>
<dbReference type="Pfam" id="PF22919">
    <property type="entry name" value="ATP-synt_VA_C"/>
    <property type="match status" value="1"/>
</dbReference>
<dbReference type="SMART" id="SM00382">
    <property type="entry name" value="AAA"/>
    <property type="match status" value="1"/>
</dbReference>
<dbReference type="SUPFAM" id="SSF47917">
    <property type="entry name" value="C-terminal domain of alpha and beta subunits of F1 ATP synthase"/>
    <property type="match status" value="1"/>
</dbReference>
<dbReference type="SUPFAM" id="SSF50615">
    <property type="entry name" value="N-terminal domain of alpha and beta subunits of F1 ATP synthase"/>
    <property type="match status" value="1"/>
</dbReference>
<dbReference type="SUPFAM" id="SSF52540">
    <property type="entry name" value="P-loop containing nucleoside triphosphate hydrolases"/>
    <property type="match status" value="1"/>
</dbReference>
<dbReference type="PROSITE" id="PS00152">
    <property type="entry name" value="ATPASE_ALPHA_BETA"/>
    <property type="match status" value="1"/>
</dbReference>
<sequence length="498" mass="53746">MKINPTNSSSLTSTLEKKNLGNITQIIGPVLDVAFPPGKMPNIYNALVVKGRDTAGQQINVTCEVQQLLGNNRVRAVAMSATDGLTRGMEVMDTGAPLSVPVGGTTLGRIFNVLGEPVDNLGPVDTRTTSPIHRSAPAFIQLDTKLSIFETGIKVVDLLAPYRRGGKIGLFGGAGVGKTVLIMELINNIAKAHGGVSVFGGVGERTREGNDLYMEMKESGVINEENIAESKVALVYGQMNEPPGARMRVGLTALTMAEYFRDVNEQDVLLFIDNIFRFVQAGSEVSALLGRMPSAVGYQPTLSTEMGTLQERITSTKEGSITSIQAVYVPADDLTDPAPATTFAHLDATTVLSRGLAAKGIYPAVDPLDSTSTMLQPRIVGEDHYETAQKVKQTLQRYKELQDIIAILGLDELSEEDRLTVARARKIERFLSQPFFVAEVFTGSPGKYVGLSETIRGFRLILSGELDSLPEQAFYLVGNIDEATAKAMNLEMESNSNK</sequence>